<keyword id="KW-0066">ATP synthesis</keyword>
<keyword id="KW-1003">Cell membrane</keyword>
<keyword id="KW-0138">CF(0)</keyword>
<keyword id="KW-0375">Hydrogen ion transport</keyword>
<keyword id="KW-0406">Ion transport</keyword>
<keyword id="KW-0472">Membrane</keyword>
<keyword id="KW-0812">Transmembrane</keyword>
<keyword id="KW-1133">Transmembrane helix</keyword>
<keyword id="KW-0813">Transport</keyword>
<comment type="function">
    <text evidence="1">Key component of the proton channel; it plays a direct role in the translocation of protons across the membrane.</text>
</comment>
<comment type="subunit">
    <text evidence="1">F-type ATPases have 2 components, CF(1) - the catalytic core - and CF(0) - the membrane proton channel. CF(1) has five subunits: alpha(3), beta(3), gamma(1), delta(1), epsilon(1). CF(0) has three main subunits: a(1), b(2) and c(9-12). The alpha and beta chains form an alternating ring which encloses part of the gamma chain. CF(1) is attached to CF(0) by a central stalk formed by the gamma and epsilon chains, while a peripheral stalk is formed by the delta and b chains.</text>
</comment>
<comment type="subcellular location">
    <subcellularLocation>
        <location evidence="1">Cell membrane</location>
        <topology evidence="1">Multi-pass membrane protein</topology>
    </subcellularLocation>
</comment>
<comment type="similarity">
    <text evidence="1">Belongs to the ATPase A chain family.</text>
</comment>
<proteinExistence type="inferred from homology"/>
<protein>
    <recommendedName>
        <fullName evidence="1">ATP synthase subunit a</fullName>
    </recommendedName>
    <alternativeName>
        <fullName evidence="1">ATP synthase F0 sector subunit a</fullName>
    </alternativeName>
    <alternativeName>
        <fullName evidence="1">F-ATPase subunit 6</fullName>
    </alternativeName>
</protein>
<dbReference type="EMBL" id="CP000703">
    <property type="protein sequence ID" value="ABQ49927.1"/>
    <property type="molecule type" value="Genomic_DNA"/>
</dbReference>
<dbReference type="RefSeq" id="WP_000349655.1">
    <property type="nucleotide sequence ID" value="NC_009487.1"/>
</dbReference>
<dbReference type="SMR" id="A5IUQ4"/>
<dbReference type="KEGG" id="saj:SaurJH9_2145"/>
<dbReference type="HOGENOM" id="CLU_041018_2_3_9"/>
<dbReference type="GO" id="GO:0005886">
    <property type="term" value="C:plasma membrane"/>
    <property type="evidence" value="ECO:0007669"/>
    <property type="project" value="UniProtKB-SubCell"/>
</dbReference>
<dbReference type="GO" id="GO:0045259">
    <property type="term" value="C:proton-transporting ATP synthase complex"/>
    <property type="evidence" value="ECO:0007669"/>
    <property type="project" value="UniProtKB-KW"/>
</dbReference>
<dbReference type="GO" id="GO:0046933">
    <property type="term" value="F:proton-transporting ATP synthase activity, rotational mechanism"/>
    <property type="evidence" value="ECO:0007669"/>
    <property type="project" value="UniProtKB-UniRule"/>
</dbReference>
<dbReference type="GO" id="GO:0042777">
    <property type="term" value="P:proton motive force-driven plasma membrane ATP synthesis"/>
    <property type="evidence" value="ECO:0007669"/>
    <property type="project" value="TreeGrafter"/>
</dbReference>
<dbReference type="CDD" id="cd00310">
    <property type="entry name" value="ATP-synt_Fo_a_6"/>
    <property type="match status" value="1"/>
</dbReference>
<dbReference type="FunFam" id="1.20.120.220:FF:000005">
    <property type="entry name" value="ATP synthase subunit a"/>
    <property type="match status" value="1"/>
</dbReference>
<dbReference type="Gene3D" id="1.20.120.220">
    <property type="entry name" value="ATP synthase, F0 complex, subunit A"/>
    <property type="match status" value="1"/>
</dbReference>
<dbReference type="HAMAP" id="MF_01393">
    <property type="entry name" value="ATP_synth_a_bact"/>
    <property type="match status" value="1"/>
</dbReference>
<dbReference type="InterPro" id="IPR045082">
    <property type="entry name" value="ATP_syn_F0_a_bact/chloroplast"/>
</dbReference>
<dbReference type="InterPro" id="IPR000568">
    <property type="entry name" value="ATP_synth_F0_asu"/>
</dbReference>
<dbReference type="InterPro" id="IPR023011">
    <property type="entry name" value="ATP_synth_F0_asu_AS"/>
</dbReference>
<dbReference type="InterPro" id="IPR035908">
    <property type="entry name" value="F0_ATP_A_sf"/>
</dbReference>
<dbReference type="NCBIfam" id="TIGR01131">
    <property type="entry name" value="ATP_synt_6_or_A"/>
    <property type="match status" value="1"/>
</dbReference>
<dbReference type="NCBIfam" id="NF004479">
    <property type="entry name" value="PRK05815.1-4"/>
    <property type="match status" value="1"/>
</dbReference>
<dbReference type="PANTHER" id="PTHR42823">
    <property type="entry name" value="ATP SYNTHASE SUBUNIT A, CHLOROPLASTIC"/>
    <property type="match status" value="1"/>
</dbReference>
<dbReference type="PANTHER" id="PTHR42823:SF3">
    <property type="entry name" value="ATP SYNTHASE SUBUNIT A, CHLOROPLASTIC"/>
    <property type="match status" value="1"/>
</dbReference>
<dbReference type="Pfam" id="PF00119">
    <property type="entry name" value="ATP-synt_A"/>
    <property type="match status" value="1"/>
</dbReference>
<dbReference type="PRINTS" id="PR00123">
    <property type="entry name" value="ATPASEA"/>
</dbReference>
<dbReference type="SUPFAM" id="SSF81336">
    <property type="entry name" value="F1F0 ATP synthase subunit A"/>
    <property type="match status" value="1"/>
</dbReference>
<dbReference type="PROSITE" id="PS00449">
    <property type="entry name" value="ATPASE_A"/>
    <property type="match status" value="1"/>
</dbReference>
<gene>
    <name evidence="1" type="primary">atpB</name>
    <name type="ordered locus">SaurJH9_2145</name>
</gene>
<organism>
    <name type="scientific">Staphylococcus aureus (strain JH9)</name>
    <dbReference type="NCBI Taxonomy" id="359786"/>
    <lineage>
        <taxon>Bacteria</taxon>
        <taxon>Bacillati</taxon>
        <taxon>Bacillota</taxon>
        <taxon>Bacilli</taxon>
        <taxon>Bacillales</taxon>
        <taxon>Staphylococcaceae</taxon>
        <taxon>Staphylococcus</taxon>
    </lineage>
</organism>
<reference key="1">
    <citation type="submission" date="2007-05" db="EMBL/GenBank/DDBJ databases">
        <title>Complete sequence of chromosome of Staphylococcus aureus subsp. aureus JH9.</title>
        <authorList>
            <consortium name="US DOE Joint Genome Institute"/>
            <person name="Copeland A."/>
            <person name="Lucas S."/>
            <person name="Lapidus A."/>
            <person name="Barry K."/>
            <person name="Detter J.C."/>
            <person name="Glavina del Rio T."/>
            <person name="Hammon N."/>
            <person name="Israni S."/>
            <person name="Pitluck S."/>
            <person name="Chain P."/>
            <person name="Malfatti S."/>
            <person name="Shin M."/>
            <person name="Vergez L."/>
            <person name="Schmutz J."/>
            <person name="Larimer F."/>
            <person name="Land M."/>
            <person name="Hauser L."/>
            <person name="Kyrpides N."/>
            <person name="Kim E."/>
            <person name="Tomasz A."/>
            <person name="Richardson P."/>
        </authorList>
    </citation>
    <scope>NUCLEOTIDE SEQUENCE [LARGE SCALE GENOMIC DNA]</scope>
    <source>
        <strain>JH9</strain>
    </source>
</reference>
<accession>A5IUQ4</accession>
<feature type="chain" id="PRO_1000145308" description="ATP synthase subunit a">
    <location>
        <begin position="1"/>
        <end position="242"/>
    </location>
</feature>
<feature type="transmembrane region" description="Helical" evidence="1">
    <location>
        <begin position="21"/>
        <end position="41"/>
    </location>
</feature>
<feature type="transmembrane region" description="Helical" evidence="1">
    <location>
        <begin position="83"/>
        <end position="103"/>
    </location>
</feature>
<feature type="transmembrane region" description="Helical" evidence="1">
    <location>
        <begin position="117"/>
        <end position="137"/>
    </location>
</feature>
<feature type="transmembrane region" description="Helical" evidence="1">
    <location>
        <begin position="175"/>
        <end position="195"/>
    </location>
</feature>
<feature type="transmembrane region" description="Helical" evidence="1">
    <location>
        <begin position="198"/>
        <end position="218"/>
    </location>
</feature>
<evidence type="ECO:0000255" key="1">
    <source>
        <dbReference type="HAMAP-Rule" id="MF_01393"/>
    </source>
</evidence>
<name>ATP6_STAA9</name>
<sequence length="242" mass="27630">MDHKSPLVSWNLFGFDIVFNLSSILMILVTAFLVFLLAIICTRNLKKRPTGKQNFVEWIFDFVRGIIEGNMAWKKGGQFHFLAVTLILYIFIANMLGLPFSIVTKDHTLWWKSPTADATVTLTLSTTIILLTHFYGIKMRGTKQYLKGYVQPFWPLAIINVFEEFTSTLTLGLRLYGNIFAGEILLTLLAGLFFNEPAWGWIISIPGLIVWQAFSIFVGTIQAYIFIMLSMVYMSHKVADEH</sequence>